<name>YIPH_SCHPO</name>
<reference key="1">
    <citation type="journal article" date="2002" name="Nature">
        <title>The genome sequence of Schizosaccharomyces pombe.</title>
        <authorList>
            <person name="Wood V."/>
            <person name="Gwilliam R."/>
            <person name="Rajandream M.A."/>
            <person name="Lyne M.H."/>
            <person name="Lyne R."/>
            <person name="Stewart A."/>
            <person name="Sgouros J.G."/>
            <person name="Peat N."/>
            <person name="Hayles J."/>
            <person name="Baker S.G."/>
            <person name="Basham D."/>
            <person name="Bowman S."/>
            <person name="Brooks K."/>
            <person name="Brown D."/>
            <person name="Brown S."/>
            <person name="Chillingworth T."/>
            <person name="Churcher C.M."/>
            <person name="Collins M."/>
            <person name="Connor R."/>
            <person name="Cronin A."/>
            <person name="Davis P."/>
            <person name="Feltwell T."/>
            <person name="Fraser A."/>
            <person name="Gentles S."/>
            <person name="Goble A."/>
            <person name="Hamlin N."/>
            <person name="Harris D.E."/>
            <person name="Hidalgo J."/>
            <person name="Hodgson G."/>
            <person name="Holroyd S."/>
            <person name="Hornsby T."/>
            <person name="Howarth S."/>
            <person name="Huckle E.J."/>
            <person name="Hunt S."/>
            <person name="Jagels K."/>
            <person name="James K.D."/>
            <person name="Jones L."/>
            <person name="Jones M."/>
            <person name="Leather S."/>
            <person name="McDonald S."/>
            <person name="McLean J."/>
            <person name="Mooney P."/>
            <person name="Moule S."/>
            <person name="Mungall K.L."/>
            <person name="Murphy L.D."/>
            <person name="Niblett D."/>
            <person name="Odell C."/>
            <person name="Oliver K."/>
            <person name="O'Neil S."/>
            <person name="Pearson D."/>
            <person name="Quail M.A."/>
            <person name="Rabbinowitsch E."/>
            <person name="Rutherford K.M."/>
            <person name="Rutter S."/>
            <person name="Saunders D."/>
            <person name="Seeger K."/>
            <person name="Sharp S."/>
            <person name="Skelton J."/>
            <person name="Simmonds M.N."/>
            <person name="Squares R."/>
            <person name="Squares S."/>
            <person name="Stevens K."/>
            <person name="Taylor K."/>
            <person name="Taylor R.G."/>
            <person name="Tivey A."/>
            <person name="Walsh S.V."/>
            <person name="Warren T."/>
            <person name="Whitehead S."/>
            <person name="Woodward J.R."/>
            <person name="Volckaert G."/>
            <person name="Aert R."/>
            <person name="Robben J."/>
            <person name="Grymonprez B."/>
            <person name="Weltjens I."/>
            <person name="Vanstreels E."/>
            <person name="Rieger M."/>
            <person name="Schaefer M."/>
            <person name="Mueller-Auer S."/>
            <person name="Gabel C."/>
            <person name="Fuchs M."/>
            <person name="Duesterhoeft A."/>
            <person name="Fritzc C."/>
            <person name="Holzer E."/>
            <person name="Moestl D."/>
            <person name="Hilbert H."/>
            <person name="Borzym K."/>
            <person name="Langer I."/>
            <person name="Beck A."/>
            <person name="Lehrach H."/>
            <person name="Reinhardt R."/>
            <person name="Pohl T.M."/>
            <person name="Eger P."/>
            <person name="Zimmermann W."/>
            <person name="Wedler H."/>
            <person name="Wambutt R."/>
            <person name="Purnelle B."/>
            <person name="Goffeau A."/>
            <person name="Cadieu E."/>
            <person name="Dreano S."/>
            <person name="Gloux S."/>
            <person name="Lelaure V."/>
            <person name="Mottier S."/>
            <person name="Galibert F."/>
            <person name="Aves S.J."/>
            <person name="Xiang Z."/>
            <person name="Hunt C."/>
            <person name="Moore K."/>
            <person name="Hurst S.M."/>
            <person name="Lucas M."/>
            <person name="Rochet M."/>
            <person name="Gaillardin C."/>
            <person name="Tallada V.A."/>
            <person name="Garzon A."/>
            <person name="Thode G."/>
            <person name="Daga R.R."/>
            <person name="Cruzado L."/>
            <person name="Jimenez J."/>
            <person name="Sanchez M."/>
            <person name="del Rey F."/>
            <person name="Benito J."/>
            <person name="Dominguez A."/>
            <person name="Revuelta J.L."/>
            <person name="Moreno S."/>
            <person name="Armstrong J."/>
            <person name="Forsburg S.L."/>
            <person name="Cerutti L."/>
            <person name="Lowe T."/>
            <person name="McCombie W.R."/>
            <person name="Paulsen I."/>
            <person name="Potashkin J."/>
            <person name="Shpakovski G.V."/>
            <person name="Ussery D."/>
            <person name="Barrell B.G."/>
            <person name="Nurse P."/>
        </authorList>
    </citation>
    <scope>NUCLEOTIDE SEQUENCE [LARGE SCALE GENOMIC DNA]</scope>
    <source>
        <strain>972 / ATCC 24843</strain>
    </source>
</reference>
<dbReference type="EMBL" id="CU329670">
    <property type="protein sequence ID" value="CAB52280.1"/>
    <property type="molecule type" value="Genomic_DNA"/>
</dbReference>
<dbReference type="PIR" id="T38666">
    <property type="entry name" value="T38666"/>
</dbReference>
<dbReference type="SMR" id="Q9UT73"/>
<dbReference type="BioGRID" id="279555">
    <property type="interactions" value="2"/>
</dbReference>
<dbReference type="FunCoup" id="Q9UT73">
    <property type="interactions" value="929"/>
</dbReference>
<dbReference type="STRING" id="284812.Q9UT73"/>
<dbReference type="iPTMnet" id="Q9UT73"/>
<dbReference type="PaxDb" id="4896-SPAC343.17c.1"/>
<dbReference type="EnsemblFungi" id="SPAC343.17c.1">
    <property type="protein sequence ID" value="SPAC343.17c.1:pep"/>
    <property type="gene ID" value="SPAC343.17c"/>
</dbReference>
<dbReference type="KEGG" id="spo:2543123"/>
<dbReference type="PomBase" id="SPAC343.17c"/>
<dbReference type="VEuPathDB" id="FungiDB:SPAC343.17c"/>
<dbReference type="eggNOG" id="KOG0772">
    <property type="taxonomic scope" value="Eukaryota"/>
</dbReference>
<dbReference type="HOGENOM" id="CLU_014033_1_2_1"/>
<dbReference type="InParanoid" id="Q9UT73"/>
<dbReference type="OMA" id="KGDQYIT"/>
<dbReference type="PhylomeDB" id="Q9UT73"/>
<dbReference type="Reactome" id="R-SPO-72163">
    <property type="pathway name" value="mRNA Splicing - Major Pathway"/>
</dbReference>
<dbReference type="PRO" id="PR:Q9UT73"/>
<dbReference type="Proteomes" id="UP000002485">
    <property type="component" value="Chromosome I"/>
</dbReference>
<dbReference type="GO" id="GO:0080008">
    <property type="term" value="C:Cul4-RING E3 ubiquitin ligase complex"/>
    <property type="evidence" value="ECO:0000314"/>
    <property type="project" value="PomBase"/>
</dbReference>
<dbReference type="GO" id="GO:0005634">
    <property type="term" value="C:nucleus"/>
    <property type="evidence" value="ECO:0000314"/>
    <property type="project" value="PomBase"/>
</dbReference>
<dbReference type="GO" id="GO:0035861">
    <property type="term" value="C:site of double-strand break"/>
    <property type="evidence" value="ECO:0000314"/>
    <property type="project" value="PomBase"/>
</dbReference>
<dbReference type="GO" id="GO:0000724">
    <property type="term" value="P:double-strand break repair via homologous recombination"/>
    <property type="evidence" value="ECO:0000315"/>
    <property type="project" value="PomBase"/>
</dbReference>
<dbReference type="FunFam" id="2.130.10.10:FF:002226">
    <property type="entry name" value="Uncharacterized WD repeat-containing protein C343.17c"/>
    <property type="match status" value="1"/>
</dbReference>
<dbReference type="Gene3D" id="2.130.10.10">
    <property type="entry name" value="YVTN repeat-like/Quinoprotein amine dehydrogenase"/>
    <property type="match status" value="2"/>
</dbReference>
<dbReference type="InterPro" id="IPR020472">
    <property type="entry name" value="G-protein_beta_WD-40_rep"/>
</dbReference>
<dbReference type="InterPro" id="IPR015943">
    <property type="entry name" value="WD40/YVTN_repeat-like_dom_sf"/>
</dbReference>
<dbReference type="InterPro" id="IPR036322">
    <property type="entry name" value="WD40_repeat_dom_sf"/>
</dbReference>
<dbReference type="InterPro" id="IPR001680">
    <property type="entry name" value="WD40_rpt"/>
</dbReference>
<dbReference type="InterPro" id="IPR051858">
    <property type="entry name" value="WD_repeat_GAD-1"/>
</dbReference>
<dbReference type="PANTHER" id="PTHR16017">
    <property type="entry name" value="GASTRULATION DEFECTIVE PROTEIN 1-RELATED"/>
    <property type="match status" value="1"/>
</dbReference>
<dbReference type="PANTHER" id="PTHR16017:SF0">
    <property type="entry name" value="WD REPEAT-CONTAINING PROTEIN 70"/>
    <property type="match status" value="1"/>
</dbReference>
<dbReference type="Pfam" id="PF00400">
    <property type="entry name" value="WD40"/>
    <property type="match status" value="3"/>
</dbReference>
<dbReference type="PRINTS" id="PR00320">
    <property type="entry name" value="GPROTEINBRPT"/>
</dbReference>
<dbReference type="SMART" id="SM00320">
    <property type="entry name" value="WD40"/>
    <property type="match status" value="4"/>
</dbReference>
<dbReference type="SUPFAM" id="SSF50978">
    <property type="entry name" value="WD40 repeat-like"/>
    <property type="match status" value="1"/>
</dbReference>
<dbReference type="PROSITE" id="PS50082">
    <property type="entry name" value="WD_REPEATS_2"/>
    <property type="match status" value="3"/>
</dbReference>
<dbReference type="PROSITE" id="PS50294">
    <property type="entry name" value="WD_REPEATS_REGION"/>
    <property type="match status" value="2"/>
</dbReference>
<evidence type="ECO:0000256" key="1">
    <source>
        <dbReference type="SAM" id="MobiDB-lite"/>
    </source>
</evidence>
<sequence>MDGTNNTIPLQFGKQAQTYDINALIARFIRPKESFLINSVEKESESKLNSKSTTLQSSDSEDWDSEENEDDITDVGVPGSHEIMFPGHSKIVTTTTFDKNGSRFYTGSLDNTIHCWDLNGLSATNPHPFKIIDPTDTNADNVGRYPVSKLSCSTKNQILALYTHSQPILYDRDGSLIVRFSKGDQYIRNMYNTKGHIAEITDGCWQPDSSQIFLTTGYDSTARIWDVNRTKSQLEVFVHVPEGSHTGLSRIPVTSCAWNPAKPDNFATAVLDGSIQFWQKGSRTKRPVMKIKDAHLPQQGISCLSFSQDGNYLLSRGEDNALRVWDLRNSNKCVNERIDILTPKAGGNAIFSPTQKLILAGSTAVNSMKAPLFVLDAMTLDTKATLFFDSKSTVTASVSAVSWNEKINQVSLGSADGNAYVLFSPNESIRGVKDAAMRPPKSKHIDDDLSSTVHINSLSGSAGTSDFGLVEETTESASAYFLEARRRRNAVRKDPKLSRQPQVGRLLEENSVDDIPLATMLNEDPREALLKYADVAKSNPMFTKMYSETQPTPIYQGVTEGDISSEEGNPSKKQKR</sequence>
<protein>
    <recommendedName>
        <fullName>Uncharacterized WD repeat-containing protein C343.17c</fullName>
    </recommendedName>
</protein>
<organism>
    <name type="scientific">Schizosaccharomyces pombe (strain 972 / ATCC 24843)</name>
    <name type="common">Fission yeast</name>
    <dbReference type="NCBI Taxonomy" id="284812"/>
    <lineage>
        <taxon>Eukaryota</taxon>
        <taxon>Fungi</taxon>
        <taxon>Dikarya</taxon>
        <taxon>Ascomycota</taxon>
        <taxon>Taphrinomycotina</taxon>
        <taxon>Schizosaccharomycetes</taxon>
        <taxon>Schizosaccharomycetales</taxon>
        <taxon>Schizosaccharomycetaceae</taxon>
        <taxon>Schizosaccharomyces</taxon>
    </lineage>
</organism>
<feature type="chain" id="PRO_0000316561" description="Uncharacterized WD repeat-containing protein C343.17c">
    <location>
        <begin position="1"/>
        <end position="576"/>
    </location>
</feature>
<feature type="repeat" description="WD 1">
    <location>
        <begin position="87"/>
        <end position="126"/>
    </location>
</feature>
<feature type="repeat" description="WD 2">
    <location>
        <begin position="195"/>
        <end position="235"/>
    </location>
</feature>
<feature type="repeat" description="WD 3">
    <location>
        <begin position="248"/>
        <end position="288"/>
    </location>
</feature>
<feature type="repeat" description="WD 4">
    <location>
        <begin position="296"/>
        <end position="335"/>
    </location>
</feature>
<feature type="repeat" description="WD 5">
    <location>
        <begin position="393"/>
        <end position="433"/>
    </location>
</feature>
<feature type="region of interest" description="Disordered" evidence="1">
    <location>
        <begin position="41"/>
        <end position="78"/>
    </location>
</feature>
<feature type="region of interest" description="Disordered" evidence="1">
    <location>
        <begin position="547"/>
        <end position="576"/>
    </location>
</feature>
<feature type="compositionally biased region" description="Low complexity" evidence="1">
    <location>
        <begin position="49"/>
        <end position="58"/>
    </location>
</feature>
<feature type="compositionally biased region" description="Acidic residues" evidence="1">
    <location>
        <begin position="59"/>
        <end position="73"/>
    </location>
</feature>
<proteinExistence type="predicted"/>
<accession>Q9UT73</accession>
<gene>
    <name type="ORF">SPAC343.17c</name>
</gene>
<keyword id="KW-1185">Reference proteome</keyword>
<keyword id="KW-0677">Repeat</keyword>
<keyword id="KW-0853">WD repeat</keyword>